<sequence>MNATYYLSKPLERRRSVGVAVGDVMVGGQNPVVVQSMTNTDTADVDATVSQVAALWQAGSQLVRITVDRDEAAAAVPKIRERLERLGFSIPLVGDFHYIGHKLLSEHPACAEALAKYRINPGNVGFGAKKDRQFAEIIEIASRYHKPIRIGVNWGSLDNALLTQLMNENAQQENPLSVAEVMRETVVQSALLSAALAEELGLGRDKIILSAKVSDVQDLIAVYTTLAERCDYALHLGLTEAGMGTKGVVASSVALGILLQQGIGDTIRISLTPEPGGDRTREVKVGQELLQVMGFRQFLPVVAACPGCGRTTSTVFQQLAQKIEADLHKNMPVWREKYPGVESLKVAVMGCIVNGPGESKHADIGISLPGVGESPAAPVFIEGQKVKTLRGDHIAEEFEGILSDYIHKRFGQG</sequence>
<accession>A9IYW1</accession>
<proteinExistence type="inferred from homology"/>
<feature type="chain" id="PRO_1000076877" description="4-hydroxy-3-methylbut-2-en-1-yl diphosphate synthase (flavodoxin)">
    <location>
        <begin position="1"/>
        <end position="413"/>
    </location>
</feature>
<feature type="binding site" evidence="1">
    <location>
        <position position="305"/>
    </location>
    <ligand>
        <name>[4Fe-4S] cluster</name>
        <dbReference type="ChEBI" id="CHEBI:49883"/>
    </ligand>
</feature>
<feature type="binding site" evidence="1">
    <location>
        <position position="308"/>
    </location>
    <ligand>
        <name>[4Fe-4S] cluster</name>
        <dbReference type="ChEBI" id="CHEBI:49883"/>
    </ligand>
</feature>
<feature type="binding site" evidence="1">
    <location>
        <position position="351"/>
    </location>
    <ligand>
        <name>[4Fe-4S] cluster</name>
        <dbReference type="ChEBI" id="CHEBI:49883"/>
    </ligand>
</feature>
<feature type="binding site" evidence="1">
    <location>
        <position position="358"/>
    </location>
    <ligand>
        <name>[4Fe-4S] cluster</name>
        <dbReference type="ChEBI" id="CHEBI:49883"/>
    </ligand>
</feature>
<name>ISPG_BART1</name>
<reference key="1">
    <citation type="journal article" date="2007" name="Nat. Genet.">
        <title>Genomic analysis of Bartonella identifies type IV secretion systems as host adaptability factors.</title>
        <authorList>
            <person name="Saenz H.L."/>
            <person name="Engel P."/>
            <person name="Stoeckli M.C."/>
            <person name="Lanz C."/>
            <person name="Raddatz G."/>
            <person name="Vayssier-Taussat M."/>
            <person name="Birtles R."/>
            <person name="Schuster S.C."/>
            <person name="Dehio C."/>
        </authorList>
    </citation>
    <scope>NUCLEOTIDE SEQUENCE [LARGE SCALE GENOMIC DNA]</scope>
    <source>
        <strain>CIP 105476 / IBS 506</strain>
    </source>
</reference>
<keyword id="KW-0004">4Fe-4S</keyword>
<keyword id="KW-0408">Iron</keyword>
<keyword id="KW-0411">Iron-sulfur</keyword>
<keyword id="KW-0414">Isoprene biosynthesis</keyword>
<keyword id="KW-0479">Metal-binding</keyword>
<keyword id="KW-0560">Oxidoreductase</keyword>
<dbReference type="EC" id="1.17.7.3" evidence="1"/>
<dbReference type="EMBL" id="AM260525">
    <property type="protein sequence ID" value="CAK02437.1"/>
    <property type="molecule type" value="Genomic_DNA"/>
</dbReference>
<dbReference type="RefSeq" id="WP_012232478.1">
    <property type="nucleotide sequence ID" value="NC_010161.1"/>
</dbReference>
<dbReference type="SMR" id="A9IYW1"/>
<dbReference type="KEGG" id="btr:BT_2457"/>
<dbReference type="eggNOG" id="COG0821">
    <property type="taxonomic scope" value="Bacteria"/>
</dbReference>
<dbReference type="HOGENOM" id="CLU_042258_1_0_5"/>
<dbReference type="UniPathway" id="UPA00056">
    <property type="reaction ID" value="UER00096"/>
</dbReference>
<dbReference type="Proteomes" id="UP000001592">
    <property type="component" value="Chromosome"/>
</dbReference>
<dbReference type="GO" id="GO:0051539">
    <property type="term" value="F:4 iron, 4 sulfur cluster binding"/>
    <property type="evidence" value="ECO:0007669"/>
    <property type="project" value="UniProtKB-UniRule"/>
</dbReference>
<dbReference type="GO" id="GO:0046429">
    <property type="term" value="F:4-hydroxy-3-methylbut-2-en-1-yl diphosphate synthase activity (ferredoxin)"/>
    <property type="evidence" value="ECO:0007669"/>
    <property type="project" value="UniProtKB-UniRule"/>
</dbReference>
<dbReference type="GO" id="GO:0141197">
    <property type="term" value="F:4-hydroxy-3-methylbut-2-enyl-diphosphate synthase activity (flavodoxin)"/>
    <property type="evidence" value="ECO:0007669"/>
    <property type="project" value="UniProtKB-EC"/>
</dbReference>
<dbReference type="GO" id="GO:0005506">
    <property type="term" value="F:iron ion binding"/>
    <property type="evidence" value="ECO:0007669"/>
    <property type="project" value="InterPro"/>
</dbReference>
<dbReference type="GO" id="GO:0019288">
    <property type="term" value="P:isopentenyl diphosphate biosynthetic process, methylerythritol 4-phosphate pathway"/>
    <property type="evidence" value="ECO:0007669"/>
    <property type="project" value="UniProtKB-UniRule"/>
</dbReference>
<dbReference type="GO" id="GO:0016114">
    <property type="term" value="P:terpenoid biosynthetic process"/>
    <property type="evidence" value="ECO:0007669"/>
    <property type="project" value="InterPro"/>
</dbReference>
<dbReference type="FunFam" id="3.20.20.20:FF:000001">
    <property type="entry name" value="4-hydroxy-3-methylbut-2-en-1-yl diphosphate synthase (flavodoxin)"/>
    <property type="match status" value="1"/>
</dbReference>
<dbReference type="FunFam" id="3.30.413.10:FF:000012">
    <property type="entry name" value="4-hydroxy-3-methylbut-2-en-1-yl diphosphate synthase (flavodoxin)"/>
    <property type="match status" value="1"/>
</dbReference>
<dbReference type="Gene3D" id="3.20.20.20">
    <property type="entry name" value="Dihydropteroate synthase-like"/>
    <property type="match status" value="1"/>
</dbReference>
<dbReference type="Gene3D" id="3.30.413.10">
    <property type="entry name" value="Sulfite Reductase Hemoprotein, domain 1"/>
    <property type="match status" value="1"/>
</dbReference>
<dbReference type="HAMAP" id="MF_00159">
    <property type="entry name" value="IspG"/>
    <property type="match status" value="1"/>
</dbReference>
<dbReference type="InterPro" id="IPR011005">
    <property type="entry name" value="Dihydropteroate_synth-like_sf"/>
</dbReference>
<dbReference type="InterPro" id="IPR016425">
    <property type="entry name" value="IspG_bac"/>
</dbReference>
<dbReference type="InterPro" id="IPR004588">
    <property type="entry name" value="IspG_bac-typ"/>
</dbReference>
<dbReference type="InterPro" id="IPR045854">
    <property type="entry name" value="NO2/SO3_Rdtase_4Fe4S_sf"/>
</dbReference>
<dbReference type="NCBIfam" id="TIGR00612">
    <property type="entry name" value="ispG_gcpE"/>
    <property type="match status" value="1"/>
</dbReference>
<dbReference type="NCBIfam" id="NF001540">
    <property type="entry name" value="PRK00366.1"/>
    <property type="match status" value="1"/>
</dbReference>
<dbReference type="PANTHER" id="PTHR30454">
    <property type="entry name" value="4-HYDROXY-3-METHYLBUT-2-EN-1-YL DIPHOSPHATE SYNTHASE"/>
    <property type="match status" value="1"/>
</dbReference>
<dbReference type="PANTHER" id="PTHR30454:SF0">
    <property type="entry name" value="4-HYDROXY-3-METHYLBUT-2-EN-1-YL DIPHOSPHATE SYNTHASE (FERREDOXIN), CHLOROPLASTIC"/>
    <property type="match status" value="1"/>
</dbReference>
<dbReference type="Pfam" id="PF04551">
    <property type="entry name" value="GcpE"/>
    <property type="match status" value="1"/>
</dbReference>
<dbReference type="PIRSF" id="PIRSF004640">
    <property type="entry name" value="IspG"/>
    <property type="match status" value="1"/>
</dbReference>
<dbReference type="SUPFAM" id="SSF56014">
    <property type="entry name" value="Nitrite and sulphite reductase 4Fe-4S domain-like"/>
    <property type="match status" value="1"/>
</dbReference>
<protein>
    <recommendedName>
        <fullName evidence="1">4-hydroxy-3-methylbut-2-en-1-yl diphosphate synthase (flavodoxin)</fullName>
        <ecNumber evidence="1">1.17.7.3</ecNumber>
    </recommendedName>
    <alternativeName>
        <fullName evidence="1">1-hydroxy-2-methyl-2-(E)-butenyl 4-diphosphate synthase</fullName>
    </alternativeName>
</protein>
<organism>
    <name type="scientific">Bartonella tribocorum (strain CIP 105476 / IBS 506)</name>
    <dbReference type="NCBI Taxonomy" id="382640"/>
    <lineage>
        <taxon>Bacteria</taxon>
        <taxon>Pseudomonadati</taxon>
        <taxon>Pseudomonadota</taxon>
        <taxon>Alphaproteobacteria</taxon>
        <taxon>Hyphomicrobiales</taxon>
        <taxon>Bartonellaceae</taxon>
        <taxon>Bartonella</taxon>
    </lineage>
</organism>
<gene>
    <name evidence="1" type="primary">ispG</name>
    <name type="ordered locus">BT_2457</name>
</gene>
<evidence type="ECO:0000255" key="1">
    <source>
        <dbReference type="HAMAP-Rule" id="MF_00159"/>
    </source>
</evidence>
<comment type="function">
    <text evidence="1">Converts 2C-methyl-D-erythritol 2,4-cyclodiphosphate (ME-2,4cPP) into 1-hydroxy-2-methyl-2-(E)-butenyl 4-diphosphate.</text>
</comment>
<comment type="catalytic activity">
    <reaction evidence="1">
        <text>(2E)-4-hydroxy-3-methylbut-2-enyl diphosphate + oxidized [flavodoxin] + H2O + 2 H(+) = 2-C-methyl-D-erythritol 2,4-cyclic diphosphate + reduced [flavodoxin]</text>
        <dbReference type="Rhea" id="RHEA:43604"/>
        <dbReference type="Rhea" id="RHEA-COMP:10622"/>
        <dbReference type="Rhea" id="RHEA-COMP:10623"/>
        <dbReference type="ChEBI" id="CHEBI:15377"/>
        <dbReference type="ChEBI" id="CHEBI:15378"/>
        <dbReference type="ChEBI" id="CHEBI:57618"/>
        <dbReference type="ChEBI" id="CHEBI:58210"/>
        <dbReference type="ChEBI" id="CHEBI:58483"/>
        <dbReference type="ChEBI" id="CHEBI:128753"/>
        <dbReference type="EC" id="1.17.7.3"/>
    </reaction>
</comment>
<comment type="cofactor">
    <cofactor evidence="1">
        <name>[4Fe-4S] cluster</name>
        <dbReference type="ChEBI" id="CHEBI:49883"/>
    </cofactor>
    <text evidence="1">Binds 1 [4Fe-4S] cluster.</text>
</comment>
<comment type="pathway">
    <text evidence="1">Isoprenoid biosynthesis; isopentenyl diphosphate biosynthesis via DXP pathway; isopentenyl diphosphate from 1-deoxy-D-xylulose 5-phosphate: step 5/6.</text>
</comment>
<comment type="similarity">
    <text evidence="1">Belongs to the IspG family.</text>
</comment>